<feature type="chain" id="PRO_0000212791" description="Serine proteinase inhibitor IA-1">
    <location>
        <begin position="1"/>
        <end position="76"/>
    </location>
</feature>
<feature type="modified residue" description="N-acetylserine" evidence="1">
    <location>
        <position position="1"/>
    </location>
</feature>
<feature type="strand" evidence="4">
    <location>
        <begin position="3"/>
        <end position="9"/>
    </location>
</feature>
<feature type="strand" evidence="3">
    <location>
        <begin position="11"/>
        <end position="13"/>
    </location>
</feature>
<feature type="helix" evidence="4">
    <location>
        <begin position="15"/>
        <end position="28"/>
    </location>
</feature>
<feature type="strand" evidence="4">
    <location>
        <begin position="34"/>
        <end position="38"/>
    </location>
</feature>
<feature type="strand" evidence="4">
    <location>
        <begin position="41"/>
        <end position="48"/>
    </location>
</feature>
<feature type="helix" evidence="4">
    <location>
        <begin position="50"/>
        <end position="58"/>
    </location>
</feature>
<feature type="turn" evidence="4">
    <location>
        <begin position="61"/>
        <end position="63"/>
    </location>
</feature>
<feature type="strand" evidence="4">
    <location>
        <begin position="64"/>
        <end position="69"/>
    </location>
</feature>
<feature type="strand" evidence="4">
    <location>
        <begin position="72"/>
        <end position="74"/>
    </location>
</feature>
<organism>
    <name type="scientific">Pleurotus ostreatus</name>
    <name type="common">Oyster mushroom</name>
    <name type="synonym">White-rot fungus</name>
    <dbReference type="NCBI Taxonomy" id="5322"/>
    <lineage>
        <taxon>Eukaryota</taxon>
        <taxon>Fungi</taxon>
        <taxon>Dikarya</taxon>
        <taxon>Basidiomycota</taxon>
        <taxon>Agaricomycotina</taxon>
        <taxon>Agaricomycetes</taxon>
        <taxon>Agaricomycetidae</taxon>
        <taxon>Agaricales</taxon>
        <taxon>Pleurotineae</taxon>
        <taxon>Pleurotaceae</taxon>
        <taxon>Pleurotus</taxon>
    </lineage>
</organism>
<evidence type="ECO:0000269" key="1">
    <source>
    </source>
</evidence>
<evidence type="ECO:0000305" key="2"/>
<evidence type="ECO:0007829" key="3">
    <source>
        <dbReference type="PDB" id="1ITP"/>
    </source>
</evidence>
<evidence type="ECO:0007829" key="4">
    <source>
        <dbReference type="PDB" id="1V5I"/>
    </source>
</evidence>
<protein>
    <recommendedName>
        <fullName>Serine proteinase inhibitor IA-1</fullName>
    </recommendedName>
    <alternativeName>
        <fullName>Proteinase A inhibitor 1</fullName>
    </alternativeName>
</protein>
<name>PIA1_PLEOS</name>
<proteinExistence type="evidence at protein level"/>
<accession>Q7M4T6</accession>
<sequence length="76" mass="8267">SAGKFIVIFKNDVSEDKIRETKDEVIAEGGTITNEYNMPGMKGFAGELTPQSLTKFQGLQGDLIDSIEEDGIVTTQ</sequence>
<comment type="function">
    <text>Specifically inhibits an endogenous intracellular serine proteinase (proteinase A).</text>
</comment>
<comment type="similarity">
    <text evidence="2">Belongs to the protease inhibitor I9 family.</text>
</comment>
<keyword id="KW-0002">3D-structure</keyword>
<keyword id="KW-0007">Acetylation</keyword>
<keyword id="KW-0903">Direct protein sequencing</keyword>
<keyword id="KW-0646">Protease inhibitor</keyword>
<keyword id="KW-0722">Serine protease inhibitor</keyword>
<reference key="1">
    <citation type="journal article" date="1995" name="Arch. Biochem. Biophys.">
        <title>The complete amino acid sequences of two serine proteinase inhibitors from the fruiting bodies of a basidiomycete, Pleurotus ostreatus.</title>
        <authorList>
            <person name="Dohmae N."/>
            <person name="Takio K."/>
            <person name="Tsumuraya Y."/>
            <person name="Hashimoto Y."/>
        </authorList>
    </citation>
    <scope>PROTEIN SEQUENCE</scope>
    <scope>ACETYLATION AT SER-1</scope>
</reference>
<dbReference type="PIR" id="S69162">
    <property type="entry name" value="S69162"/>
</dbReference>
<dbReference type="PDB" id="1ITP">
    <property type="method" value="NMR"/>
    <property type="chains" value="A=1-76"/>
</dbReference>
<dbReference type="PDB" id="1V5I">
    <property type="method" value="X-ray"/>
    <property type="resolution" value="1.50 A"/>
    <property type="chains" value="B=1-76"/>
</dbReference>
<dbReference type="PDBsum" id="1ITP"/>
<dbReference type="PDBsum" id="1V5I"/>
<dbReference type="SMR" id="Q7M4T6"/>
<dbReference type="MEROPS" id="I09.002"/>
<dbReference type="iPTMnet" id="Q7M4T6"/>
<dbReference type="VEuPathDB" id="FungiDB:PC9H_007355"/>
<dbReference type="VEuPathDB" id="FungiDB:PLEOSDRAFT_1089399"/>
<dbReference type="EvolutionaryTrace" id="Q7M4T6"/>
<dbReference type="GO" id="GO:0004867">
    <property type="term" value="F:serine-type endopeptidase inhibitor activity"/>
    <property type="evidence" value="ECO:0007669"/>
    <property type="project" value="UniProtKB-KW"/>
</dbReference>
<dbReference type="GO" id="GO:0042144">
    <property type="term" value="P:vacuole fusion, non-autophagic"/>
    <property type="evidence" value="ECO:0007669"/>
    <property type="project" value="TreeGrafter"/>
</dbReference>
<dbReference type="Gene3D" id="3.30.70.80">
    <property type="entry name" value="Peptidase S8 propeptide/proteinase inhibitor I9"/>
    <property type="match status" value="1"/>
</dbReference>
<dbReference type="InterPro" id="IPR052471">
    <property type="entry name" value="PBI_I9"/>
</dbReference>
<dbReference type="InterPro" id="IPR037045">
    <property type="entry name" value="S8pro/Inhibitor_I9_sf"/>
</dbReference>
<dbReference type="PANTHER" id="PTHR28288">
    <property type="entry name" value="PROTEASE B INHIBITOR 2"/>
    <property type="match status" value="1"/>
</dbReference>
<dbReference type="PANTHER" id="PTHR28288:SF2">
    <property type="entry name" value="PROTEASE B INHIBITOR 2"/>
    <property type="match status" value="1"/>
</dbReference>
<dbReference type="SUPFAM" id="SSF54897">
    <property type="entry name" value="Protease propeptides/inhibitors"/>
    <property type="match status" value="1"/>
</dbReference>